<gene>
    <name type="primary">HBAD</name>
</gene>
<feature type="chain" id="PRO_0000052842" description="Hemoglobin subunit alpha-D">
    <location>
        <begin position="1"/>
        <end position="141"/>
    </location>
</feature>
<feature type="domain" description="Globin" evidence="1">
    <location>
        <begin position="1"/>
        <end position="141"/>
    </location>
</feature>
<feature type="binding site" description="distal binding residue">
    <location>
        <position position="58"/>
    </location>
    <ligand>
        <name>heme b</name>
        <dbReference type="ChEBI" id="CHEBI:60344"/>
    </ligand>
    <ligandPart>
        <name>Fe</name>
        <dbReference type="ChEBI" id="CHEBI:18248"/>
    </ligandPart>
</feature>
<feature type="binding site" description="proximal binding residue">
    <location>
        <position position="87"/>
    </location>
    <ligand>
        <name>heme b</name>
        <dbReference type="ChEBI" id="CHEBI:60344"/>
    </ligand>
    <ligandPart>
        <name>Fe</name>
        <dbReference type="ChEBI" id="CHEBI:18248"/>
    </ligandPart>
</feature>
<dbReference type="PIR" id="S04948">
    <property type="entry name" value="HAGRDW"/>
</dbReference>
<dbReference type="SMR" id="P68060"/>
<dbReference type="GO" id="GO:0072562">
    <property type="term" value="C:blood microparticle"/>
    <property type="evidence" value="ECO:0007669"/>
    <property type="project" value="TreeGrafter"/>
</dbReference>
<dbReference type="GO" id="GO:0031838">
    <property type="term" value="C:haptoglobin-hemoglobin complex"/>
    <property type="evidence" value="ECO:0007669"/>
    <property type="project" value="TreeGrafter"/>
</dbReference>
<dbReference type="GO" id="GO:0005833">
    <property type="term" value="C:hemoglobin complex"/>
    <property type="evidence" value="ECO:0007669"/>
    <property type="project" value="InterPro"/>
</dbReference>
<dbReference type="GO" id="GO:0031720">
    <property type="term" value="F:haptoglobin binding"/>
    <property type="evidence" value="ECO:0007669"/>
    <property type="project" value="TreeGrafter"/>
</dbReference>
<dbReference type="GO" id="GO:0020037">
    <property type="term" value="F:heme binding"/>
    <property type="evidence" value="ECO:0007669"/>
    <property type="project" value="InterPro"/>
</dbReference>
<dbReference type="GO" id="GO:0046872">
    <property type="term" value="F:metal ion binding"/>
    <property type="evidence" value="ECO:0007669"/>
    <property type="project" value="UniProtKB-KW"/>
</dbReference>
<dbReference type="GO" id="GO:0043177">
    <property type="term" value="F:organic acid binding"/>
    <property type="evidence" value="ECO:0007669"/>
    <property type="project" value="TreeGrafter"/>
</dbReference>
<dbReference type="GO" id="GO:0019825">
    <property type="term" value="F:oxygen binding"/>
    <property type="evidence" value="ECO:0007669"/>
    <property type="project" value="InterPro"/>
</dbReference>
<dbReference type="GO" id="GO:0005344">
    <property type="term" value="F:oxygen carrier activity"/>
    <property type="evidence" value="ECO:0007669"/>
    <property type="project" value="UniProtKB-KW"/>
</dbReference>
<dbReference type="GO" id="GO:0004601">
    <property type="term" value="F:peroxidase activity"/>
    <property type="evidence" value="ECO:0007669"/>
    <property type="project" value="TreeGrafter"/>
</dbReference>
<dbReference type="GO" id="GO:0042744">
    <property type="term" value="P:hydrogen peroxide catabolic process"/>
    <property type="evidence" value="ECO:0007669"/>
    <property type="project" value="TreeGrafter"/>
</dbReference>
<dbReference type="CDD" id="cd08927">
    <property type="entry name" value="Hb-alpha-like"/>
    <property type="match status" value="1"/>
</dbReference>
<dbReference type="FunFam" id="1.10.490.10:FF:000002">
    <property type="entry name" value="Hemoglobin subunit alpha"/>
    <property type="match status" value="1"/>
</dbReference>
<dbReference type="Gene3D" id="1.10.490.10">
    <property type="entry name" value="Globins"/>
    <property type="match status" value="1"/>
</dbReference>
<dbReference type="InterPro" id="IPR000971">
    <property type="entry name" value="Globin"/>
</dbReference>
<dbReference type="InterPro" id="IPR009050">
    <property type="entry name" value="Globin-like_sf"/>
</dbReference>
<dbReference type="InterPro" id="IPR012292">
    <property type="entry name" value="Globin/Proto"/>
</dbReference>
<dbReference type="InterPro" id="IPR002338">
    <property type="entry name" value="Hemoglobin_a-typ"/>
</dbReference>
<dbReference type="InterPro" id="IPR050056">
    <property type="entry name" value="Hemoglobin_oxygen_transport"/>
</dbReference>
<dbReference type="PANTHER" id="PTHR11442">
    <property type="entry name" value="HEMOGLOBIN FAMILY MEMBER"/>
    <property type="match status" value="1"/>
</dbReference>
<dbReference type="PANTHER" id="PTHR11442:SF41">
    <property type="entry name" value="HEMOGLOBIN SUBUNIT ZETA"/>
    <property type="match status" value="1"/>
</dbReference>
<dbReference type="Pfam" id="PF00042">
    <property type="entry name" value="Globin"/>
    <property type="match status" value="1"/>
</dbReference>
<dbReference type="PRINTS" id="PR00612">
    <property type="entry name" value="ALPHAHAEM"/>
</dbReference>
<dbReference type="SUPFAM" id="SSF46458">
    <property type="entry name" value="Globin-like"/>
    <property type="match status" value="1"/>
</dbReference>
<dbReference type="PROSITE" id="PS01033">
    <property type="entry name" value="GLOBIN"/>
    <property type="match status" value="1"/>
</dbReference>
<organism>
    <name type="scientific">Trigonoceps occipitalis</name>
    <name type="common">White-headed vulture</name>
    <name type="synonym">Aegypius occipitalis</name>
    <dbReference type="NCBI Taxonomy" id="8975"/>
    <lineage>
        <taxon>Eukaryota</taxon>
        <taxon>Metazoa</taxon>
        <taxon>Chordata</taxon>
        <taxon>Craniata</taxon>
        <taxon>Vertebrata</taxon>
        <taxon>Euteleostomi</taxon>
        <taxon>Archelosauria</taxon>
        <taxon>Archosauria</taxon>
        <taxon>Dinosauria</taxon>
        <taxon>Saurischia</taxon>
        <taxon>Theropoda</taxon>
        <taxon>Coelurosauria</taxon>
        <taxon>Aves</taxon>
        <taxon>Neognathae</taxon>
        <taxon>Neoaves</taxon>
        <taxon>Telluraves</taxon>
        <taxon>Accipitrimorphae</taxon>
        <taxon>Accipitriformes</taxon>
        <taxon>Accipitridae</taxon>
        <taxon>Accipitrinae</taxon>
        <taxon>Trigonoceps</taxon>
    </lineage>
</organism>
<reference key="1">
    <citation type="journal article" date="1989" name="Biol. Chem. Hoppe-Seyler">
        <title>High-altitude respiration of falconiformes. The primary structures and functional properties of the major and minor hemoglobin components of the adult White-Headed Vulture (Trigonoceps occipitalis, Aegypiinae).</title>
        <authorList>
            <person name="Hiebl I."/>
            <person name="Weber R.E."/>
            <person name="Schneeganss D."/>
            <person name="Braunitzer G."/>
        </authorList>
    </citation>
    <scope>PROTEIN SEQUENCE</scope>
</reference>
<name>HBAD_TRIOC</name>
<evidence type="ECO:0000255" key="1">
    <source>
        <dbReference type="PROSITE-ProRule" id="PRU00238"/>
    </source>
</evidence>
<proteinExistence type="evidence at protein level"/>
<accession>P68060</accession>
<accession>P07416</accession>
<comment type="function">
    <text>Involved in oxygen transport from the lung to the various peripheral tissues.</text>
</comment>
<comment type="subunit">
    <text>Heterotetramer of two alpha-D chains and two beta chains.</text>
</comment>
<comment type="tissue specificity">
    <text>Red blood cells.</text>
</comment>
<comment type="developmental stage">
    <text>In birds, the alpha-D chain occurs in a minor hemoglobin component, called hemoglobin d, which is expressed in late embryonic and adult life.</text>
</comment>
<comment type="similarity">
    <text evidence="1">Belongs to the globin family.</text>
</comment>
<keyword id="KW-0903">Direct protein sequencing</keyword>
<keyword id="KW-0349">Heme</keyword>
<keyword id="KW-0408">Iron</keyword>
<keyword id="KW-0479">Metal-binding</keyword>
<keyword id="KW-0561">Oxygen transport</keyword>
<keyword id="KW-0813">Transport</keyword>
<protein>
    <recommendedName>
        <fullName>Hemoglobin subunit alpha-D</fullName>
    </recommendedName>
    <alternativeName>
        <fullName>Alpha-D-globin</fullName>
    </alternativeName>
    <alternativeName>
        <fullName>Hemoglobin alpha-D chain</fullName>
    </alternativeName>
</protein>
<sequence>MLTADDKKLIQATWDKVQGHQEDFGAEALQRMFITYPPTKTYFPHFDLSPGSDQVRGHGKKVVNALGNAVKSMDNLSQALSELSNLHAYNLRVDPVNFKLLSQCFQVVLAVHLGKEYTPEVHAAFDKFLSAVAAVLAEKYR</sequence>